<dbReference type="EC" id="1.1.1.94" evidence="1"/>
<dbReference type="EMBL" id="CP001614">
    <property type="protein sequence ID" value="ACR12202.1"/>
    <property type="molecule type" value="Genomic_DNA"/>
</dbReference>
<dbReference type="RefSeq" id="WP_015818314.1">
    <property type="nucleotide sequence ID" value="NC_012997.1"/>
</dbReference>
<dbReference type="SMR" id="C5BL79"/>
<dbReference type="STRING" id="377629.TERTU_2515"/>
<dbReference type="KEGG" id="ttu:TERTU_2515"/>
<dbReference type="eggNOG" id="COG0240">
    <property type="taxonomic scope" value="Bacteria"/>
</dbReference>
<dbReference type="HOGENOM" id="CLU_033449_0_2_6"/>
<dbReference type="OrthoDB" id="9812273at2"/>
<dbReference type="UniPathway" id="UPA00940"/>
<dbReference type="Proteomes" id="UP000009080">
    <property type="component" value="Chromosome"/>
</dbReference>
<dbReference type="GO" id="GO:0005829">
    <property type="term" value="C:cytosol"/>
    <property type="evidence" value="ECO:0007669"/>
    <property type="project" value="TreeGrafter"/>
</dbReference>
<dbReference type="GO" id="GO:0047952">
    <property type="term" value="F:glycerol-3-phosphate dehydrogenase [NAD(P)+] activity"/>
    <property type="evidence" value="ECO:0007669"/>
    <property type="project" value="UniProtKB-UniRule"/>
</dbReference>
<dbReference type="GO" id="GO:0051287">
    <property type="term" value="F:NAD binding"/>
    <property type="evidence" value="ECO:0007669"/>
    <property type="project" value="InterPro"/>
</dbReference>
<dbReference type="GO" id="GO:0005975">
    <property type="term" value="P:carbohydrate metabolic process"/>
    <property type="evidence" value="ECO:0007669"/>
    <property type="project" value="InterPro"/>
</dbReference>
<dbReference type="GO" id="GO:0046167">
    <property type="term" value="P:glycerol-3-phosphate biosynthetic process"/>
    <property type="evidence" value="ECO:0007669"/>
    <property type="project" value="UniProtKB-UniRule"/>
</dbReference>
<dbReference type="GO" id="GO:0046168">
    <property type="term" value="P:glycerol-3-phosphate catabolic process"/>
    <property type="evidence" value="ECO:0007669"/>
    <property type="project" value="InterPro"/>
</dbReference>
<dbReference type="GO" id="GO:0046474">
    <property type="term" value="P:glycerophospholipid biosynthetic process"/>
    <property type="evidence" value="ECO:0007669"/>
    <property type="project" value="TreeGrafter"/>
</dbReference>
<dbReference type="FunFam" id="1.10.1040.10:FF:000001">
    <property type="entry name" value="Glycerol-3-phosphate dehydrogenase [NAD(P)+]"/>
    <property type="match status" value="1"/>
</dbReference>
<dbReference type="FunFam" id="3.40.50.720:FF:000019">
    <property type="entry name" value="Glycerol-3-phosphate dehydrogenase [NAD(P)+]"/>
    <property type="match status" value="1"/>
</dbReference>
<dbReference type="Gene3D" id="1.10.1040.10">
    <property type="entry name" value="N-(1-d-carboxylethyl)-l-norvaline Dehydrogenase, domain 2"/>
    <property type="match status" value="1"/>
</dbReference>
<dbReference type="Gene3D" id="3.40.50.720">
    <property type="entry name" value="NAD(P)-binding Rossmann-like Domain"/>
    <property type="match status" value="1"/>
</dbReference>
<dbReference type="HAMAP" id="MF_00394">
    <property type="entry name" value="NAD_Glyc3P_dehydrog"/>
    <property type="match status" value="1"/>
</dbReference>
<dbReference type="InterPro" id="IPR008927">
    <property type="entry name" value="6-PGluconate_DH-like_C_sf"/>
</dbReference>
<dbReference type="InterPro" id="IPR013328">
    <property type="entry name" value="6PGD_dom2"/>
</dbReference>
<dbReference type="InterPro" id="IPR006168">
    <property type="entry name" value="G3P_DH_NAD-dep"/>
</dbReference>
<dbReference type="InterPro" id="IPR006109">
    <property type="entry name" value="G3P_DH_NAD-dep_C"/>
</dbReference>
<dbReference type="InterPro" id="IPR011128">
    <property type="entry name" value="G3P_DH_NAD-dep_N"/>
</dbReference>
<dbReference type="InterPro" id="IPR036291">
    <property type="entry name" value="NAD(P)-bd_dom_sf"/>
</dbReference>
<dbReference type="NCBIfam" id="NF000940">
    <property type="entry name" value="PRK00094.1-2"/>
    <property type="match status" value="1"/>
</dbReference>
<dbReference type="NCBIfam" id="NF000942">
    <property type="entry name" value="PRK00094.1-4"/>
    <property type="match status" value="1"/>
</dbReference>
<dbReference type="NCBIfam" id="NF000946">
    <property type="entry name" value="PRK00094.2-4"/>
    <property type="match status" value="1"/>
</dbReference>
<dbReference type="PANTHER" id="PTHR11728">
    <property type="entry name" value="GLYCEROL-3-PHOSPHATE DEHYDROGENASE"/>
    <property type="match status" value="1"/>
</dbReference>
<dbReference type="PANTHER" id="PTHR11728:SF1">
    <property type="entry name" value="GLYCEROL-3-PHOSPHATE DEHYDROGENASE [NAD(+)] 2, CHLOROPLASTIC"/>
    <property type="match status" value="1"/>
</dbReference>
<dbReference type="Pfam" id="PF07479">
    <property type="entry name" value="NAD_Gly3P_dh_C"/>
    <property type="match status" value="1"/>
</dbReference>
<dbReference type="Pfam" id="PF01210">
    <property type="entry name" value="NAD_Gly3P_dh_N"/>
    <property type="match status" value="1"/>
</dbReference>
<dbReference type="PIRSF" id="PIRSF000114">
    <property type="entry name" value="Glycerol-3-P_dh"/>
    <property type="match status" value="1"/>
</dbReference>
<dbReference type="PRINTS" id="PR00077">
    <property type="entry name" value="GPDHDRGNASE"/>
</dbReference>
<dbReference type="SUPFAM" id="SSF48179">
    <property type="entry name" value="6-phosphogluconate dehydrogenase C-terminal domain-like"/>
    <property type="match status" value="1"/>
</dbReference>
<dbReference type="SUPFAM" id="SSF51735">
    <property type="entry name" value="NAD(P)-binding Rossmann-fold domains"/>
    <property type="match status" value="1"/>
</dbReference>
<organism>
    <name type="scientific">Teredinibacter turnerae (strain ATCC 39867 / T7901)</name>
    <dbReference type="NCBI Taxonomy" id="377629"/>
    <lineage>
        <taxon>Bacteria</taxon>
        <taxon>Pseudomonadati</taxon>
        <taxon>Pseudomonadota</taxon>
        <taxon>Gammaproteobacteria</taxon>
        <taxon>Cellvibrionales</taxon>
        <taxon>Cellvibrionaceae</taxon>
        <taxon>Teredinibacter</taxon>
    </lineage>
</organism>
<evidence type="ECO:0000255" key="1">
    <source>
        <dbReference type="HAMAP-Rule" id="MF_00394"/>
    </source>
</evidence>
<accession>C5BL79</accession>
<sequence>MTNSLRVAVLGGGSFGTAIANIIAANGHHTYLWMRDEDRAEKCQFERENPEYLPGYKLNDNLEITSDLVASVADADVVTLSVPSQSFREVARRVAPHIPENAIVLSTTKGIEGESFLLMSQILEQELGNVRIGVLSGPNFAKEIIQNQFTGSVIASEHDSVIQCIQQVFASKTFRIYANTDRYGVELGGALKNIYAIVTGMAAALGCGSNTQAMLLTRSLAEMTRLATALGANGMTFLGLAGVGDLILTCTSDLSRNYRVGYAIGKGESLAQVLDNIGQVAEGVNTVKIVKDKADEMGIYMPLVTGLHEVLFEGKDILEVVTGLMTGAMASDVDMQGGVQ</sequence>
<comment type="function">
    <text evidence="1">Catalyzes the reduction of the glycolytic intermediate dihydroxyacetone phosphate (DHAP) to sn-glycerol 3-phosphate (G3P), the key precursor for phospholipid synthesis.</text>
</comment>
<comment type="catalytic activity">
    <reaction evidence="1">
        <text>sn-glycerol 3-phosphate + NAD(+) = dihydroxyacetone phosphate + NADH + H(+)</text>
        <dbReference type="Rhea" id="RHEA:11092"/>
        <dbReference type="ChEBI" id="CHEBI:15378"/>
        <dbReference type="ChEBI" id="CHEBI:57540"/>
        <dbReference type="ChEBI" id="CHEBI:57597"/>
        <dbReference type="ChEBI" id="CHEBI:57642"/>
        <dbReference type="ChEBI" id="CHEBI:57945"/>
        <dbReference type="EC" id="1.1.1.94"/>
    </reaction>
    <physiologicalReaction direction="right-to-left" evidence="1">
        <dbReference type="Rhea" id="RHEA:11094"/>
    </physiologicalReaction>
</comment>
<comment type="catalytic activity">
    <reaction evidence="1">
        <text>sn-glycerol 3-phosphate + NADP(+) = dihydroxyacetone phosphate + NADPH + H(+)</text>
        <dbReference type="Rhea" id="RHEA:11096"/>
        <dbReference type="ChEBI" id="CHEBI:15378"/>
        <dbReference type="ChEBI" id="CHEBI:57597"/>
        <dbReference type="ChEBI" id="CHEBI:57642"/>
        <dbReference type="ChEBI" id="CHEBI:57783"/>
        <dbReference type="ChEBI" id="CHEBI:58349"/>
        <dbReference type="EC" id="1.1.1.94"/>
    </reaction>
    <physiologicalReaction direction="right-to-left" evidence="1">
        <dbReference type="Rhea" id="RHEA:11098"/>
    </physiologicalReaction>
</comment>
<comment type="pathway">
    <text evidence="1">Membrane lipid metabolism; glycerophospholipid metabolism.</text>
</comment>
<comment type="subcellular location">
    <subcellularLocation>
        <location evidence="1">Cytoplasm</location>
    </subcellularLocation>
</comment>
<comment type="similarity">
    <text evidence="1">Belongs to the NAD-dependent glycerol-3-phosphate dehydrogenase family.</text>
</comment>
<protein>
    <recommendedName>
        <fullName evidence="1">Glycerol-3-phosphate dehydrogenase [NAD(P)+]</fullName>
        <ecNumber evidence="1">1.1.1.94</ecNumber>
    </recommendedName>
    <alternativeName>
        <fullName evidence="1">NAD(P)(+)-dependent glycerol-3-phosphate dehydrogenase</fullName>
    </alternativeName>
    <alternativeName>
        <fullName evidence="1">NAD(P)H-dependent dihydroxyacetone-phosphate reductase</fullName>
    </alternativeName>
</protein>
<proteinExistence type="inferred from homology"/>
<feature type="chain" id="PRO_1000205869" description="Glycerol-3-phosphate dehydrogenase [NAD(P)+]">
    <location>
        <begin position="1"/>
        <end position="340"/>
    </location>
</feature>
<feature type="active site" description="Proton acceptor" evidence="1">
    <location>
        <position position="192"/>
    </location>
</feature>
<feature type="binding site" evidence="1">
    <location>
        <position position="14"/>
    </location>
    <ligand>
        <name>NADPH</name>
        <dbReference type="ChEBI" id="CHEBI:57783"/>
    </ligand>
</feature>
<feature type="binding site" evidence="1">
    <location>
        <position position="15"/>
    </location>
    <ligand>
        <name>NADPH</name>
        <dbReference type="ChEBI" id="CHEBI:57783"/>
    </ligand>
</feature>
<feature type="binding site" evidence="1">
    <location>
        <position position="35"/>
    </location>
    <ligand>
        <name>NADPH</name>
        <dbReference type="ChEBI" id="CHEBI:57783"/>
    </ligand>
</feature>
<feature type="binding site" evidence="1">
    <location>
        <position position="109"/>
    </location>
    <ligand>
        <name>NADPH</name>
        <dbReference type="ChEBI" id="CHEBI:57783"/>
    </ligand>
</feature>
<feature type="binding site" evidence="1">
    <location>
        <position position="109"/>
    </location>
    <ligand>
        <name>sn-glycerol 3-phosphate</name>
        <dbReference type="ChEBI" id="CHEBI:57597"/>
    </ligand>
</feature>
<feature type="binding site" evidence="1">
    <location>
        <position position="137"/>
    </location>
    <ligand>
        <name>sn-glycerol 3-phosphate</name>
        <dbReference type="ChEBI" id="CHEBI:57597"/>
    </ligand>
</feature>
<feature type="binding site" evidence="1">
    <location>
        <position position="141"/>
    </location>
    <ligand>
        <name>NADPH</name>
        <dbReference type="ChEBI" id="CHEBI:57783"/>
    </ligand>
</feature>
<feature type="binding site" evidence="1">
    <location>
        <position position="192"/>
    </location>
    <ligand>
        <name>sn-glycerol 3-phosphate</name>
        <dbReference type="ChEBI" id="CHEBI:57597"/>
    </ligand>
</feature>
<feature type="binding site" evidence="1">
    <location>
        <position position="245"/>
    </location>
    <ligand>
        <name>sn-glycerol 3-phosphate</name>
        <dbReference type="ChEBI" id="CHEBI:57597"/>
    </ligand>
</feature>
<feature type="binding site" evidence="1">
    <location>
        <position position="255"/>
    </location>
    <ligand>
        <name>sn-glycerol 3-phosphate</name>
        <dbReference type="ChEBI" id="CHEBI:57597"/>
    </ligand>
</feature>
<feature type="binding site" evidence="1">
    <location>
        <position position="256"/>
    </location>
    <ligand>
        <name>NADPH</name>
        <dbReference type="ChEBI" id="CHEBI:57783"/>
    </ligand>
</feature>
<feature type="binding site" evidence="1">
    <location>
        <position position="256"/>
    </location>
    <ligand>
        <name>sn-glycerol 3-phosphate</name>
        <dbReference type="ChEBI" id="CHEBI:57597"/>
    </ligand>
</feature>
<feature type="binding site" evidence="1">
    <location>
        <position position="257"/>
    </location>
    <ligand>
        <name>sn-glycerol 3-phosphate</name>
        <dbReference type="ChEBI" id="CHEBI:57597"/>
    </ligand>
</feature>
<feature type="binding site" evidence="1">
    <location>
        <position position="280"/>
    </location>
    <ligand>
        <name>NADPH</name>
        <dbReference type="ChEBI" id="CHEBI:57783"/>
    </ligand>
</feature>
<feature type="binding site" evidence="1">
    <location>
        <position position="282"/>
    </location>
    <ligand>
        <name>NADPH</name>
        <dbReference type="ChEBI" id="CHEBI:57783"/>
    </ligand>
</feature>
<name>GPDA_TERTT</name>
<keyword id="KW-0963">Cytoplasm</keyword>
<keyword id="KW-0444">Lipid biosynthesis</keyword>
<keyword id="KW-0443">Lipid metabolism</keyword>
<keyword id="KW-0520">NAD</keyword>
<keyword id="KW-0521">NADP</keyword>
<keyword id="KW-0547">Nucleotide-binding</keyword>
<keyword id="KW-0560">Oxidoreductase</keyword>
<keyword id="KW-0594">Phospholipid biosynthesis</keyword>
<keyword id="KW-1208">Phospholipid metabolism</keyword>
<keyword id="KW-1185">Reference proteome</keyword>
<reference key="1">
    <citation type="journal article" date="2009" name="PLoS ONE">
        <title>The complete genome of Teredinibacter turnerae T7901: an intracellular endosymbiont of marine wood-boring bivalves (shipworms).</title>
        <authorList>
            <person name="Yang J.C."/>
            <person name="Madupu R."/>
            <person name="Durkin A.S."/>
            <person name="Ekborg N.A."/>
            <person name="Pedamallu C.S."/>
            <person name="Hostetler J.B."/>
            <person name="Radune D."/>
            <person name="Toms B.S."/>
            <person name="Henrissat B."/>
            <person name="Coutinho P.M."/>
            <person name="Schwarz S."/>
            <person name="Field L."/>
            <person name="Trindade-Silva A.E."/>
            <person name="Soares C.A.G."/>
            <person name="Elshahawi S."/>
            <person name="Hanora A."/>
            <person name="Schmidt E.W."/>
            <person name="Haygood M.G."/>
            <person name="Posfai J."/>
            <person name="Benner J."/>
            <person name="Madinger C."/>
            <person name="Nove J."/>
            <person name="Anton B."/>
            <person name="Chaudhary K."/>
            <person name="Foster J."/>
            <person name="Holman A."/>
            <person name="Kumar S."/>
            <person name="Lessard P.A."/>
            <person name="Luyten Y.A."/>
            <person name="Slatko B."/>
            <person name="Wood N."/>
            <person name="Wu B."/>
            <person name="Teplitski M."/>
            <person name="Mougous J.D."/>
            <person name="Ward N."/>
            <person name="Eisen J.A."/>
            <person name="Badger J.H."/>
            <person name="Distel D.L."/>
        </authorList>
    </citation>
    <scope>NUCLEOTIDE SEQUENCE [LARGE SCALE GENOMIC DNA]</scope>
    <source>
        <strain>ATCC 39867 / T7901</strain>
    </source>
</reference>
<gene>
    <name evidence="1" type="primary">gpsA</name>
    <name type="ordered locus">TERTU_2515</name>
</gene>